<gene>
    <name type="ORF">SPBC336.16</name>
</gene>
<comment type="subcellular location">
    <subcellularLocation>
        <location evidence="2">Membrane</location>
        <topology evidence="2">Single-pass membrane protein</topology>
    </subcellularLocation>
</comment>
<organism>
    <name type="scientific">Schizosaccharomyces pombe (strain 972 / ATCC 24843)</name>
    <name type="common">Fission yeast</name>
    <dbReference type="NCBI Taxonomy" id="284812"/>
    <lineage>
        <taxon>Eukaryota</taxon>
        <taxon>Fungi</taxon>
        <taxon>Dikarya</taxon>
        <taxon>Ascomycota</taxon>
        <taxon>Taphrinomycotina</taxon>
        <taxon>Schizosaccharomycetes</taxon>
        <taxon>Schizosaccharomycetales</taxon>
        <taxon>Schizosaccharomycetaceae</taxon>
        <taxon>Schizosaccharomyces</taxon>
    </lineage>
</organism>
<reference key="1">
    <citation type="journal article" date="2002" name="Nature">
        <title>The genome sequence of Schizosaccharomyces pombe.</title>
        <authorList>
            <person name="Wood V."/>
            <person name="Gwilliam R."/>
            <person name="Rajandream M.A."/>
            <person name="Lyne M.H."/>
            <person name="Lyne R."/>
            <person name="Stewart A."/>
            <person name="Sgouros J.G."/>
            <person name="Peat N."/>
            <person name="Hayles J."/>
            <person name="Baker S.G."/>
            <person name="Basham D."/>
            <person name="Bowman S."/>
            <person name="Brooks K."/>
            <person name="Brown D."/>
            <person name="Brown S."/>
            <person name="Chillingworth T."/>
            <person name="Churcher C.M."/>
            <person name="Collins M."/>
            <person name="Connor R."/>
            <person name="Cronin A."/>
            <person name="Davis P."/>
            <person name="Feltwell T."/>
            <person name="Fraser A."/>
            <person name="Gentles S."/>
            <person name="Goble A."/>
            <person name="Hamlin N."/>
            <person name="Harris D.E."/>
            <person name="Hidalgo J."/>
            <person name="Hodgson G."/>
            <person name="Holroyd S."/>
            <person name="Hornsby T."/>
            <person name="Howarth S."/>
            <person name="Huckle E.J."/>
            <person name="Hunt S."/>
            <person name="Jagels K."/>
            <person name="James K.D."/>
            <person name="Jones L."/>
            <person name="Jones M."/>
            <person name="Leather S."/>
            <person name="McDonald S."/>
            <person name="McLean J."/>
            <person name="Mooney P."/>
            <person name="Moule S."/>
            <person name="Mungall K.L."/>
            <person name="Murphy L.D."/>
            <person name="Niblett D."/>
            <person name="Odell C."/>
            <person name="Oliver K."/>
            <person name="O'Neil S."/>
            <person name="Pearson D."/>
            <person name="Quail M.A."/>
            <person name="Rabbinowitsch E."/>
            <person name="Rutherford K.M."/>
            <person name="Rutter S."/>
            <person name="Saunders D."/>
            <person name="Seeger K."/>
            <person name="Sharp S."/>
            <person name="Skelton J."/>
            <person name="Simmonds M.N."/>
            <person name="Squares R."/>
            <person name="Squares S."/>
            <person name="Stevens K."/>
            <person name="Taylor K."/>
            <person name="Taylor R.G."/>
            <person name="Tivey A."/>
            <person name="Walsh S.V."/>
            <person name="Warren T."/>
            <person name="Whitehead S."/>
            <person name="Woodward J.R."/>
            <person name="Volckaert G."/>
            <person name="Aert R."/>
            <person name="Robben J."/>
            <person name="Grymonprez B."/>
            <person name="Weltjens I."/>
            <person name="Vanstreels E."/>
            <person name="Rieger M."/>
            <person name="Schaefer M."/>
            <person name="Mueller-Auer S."/>
            <person name="Gabel C."/>
            <person name="Fuchs M."/>
            <person name="Duesterhoeft A."/>
            <person name="Fritzc C."/>
            <person name="Holzer E."/>
            <person name="Moestl D."/>
            <person name="Hilbert H."/>
            <person name="Borzym K."/>
            <person name="Langer I."/>
            <person name="Beck A."/>
            <person name="Lehrach H."/>
            <person name="Reinhardt R."/>
            <person name="Pohl T.M."/>
            <person name="Eger P."/>
            <person name="Zimmermann W."/>
            <person name="Wedler H."/>
            <person name="Wambutt R."/>
            <person name="Purnelle B."/>
            <person name="Goffeau A."/>
            <person name="Cadieu E."/>
            <person name="Dreano S."/>
            <person name="Gloux S."/>
            <person name="Lelaure V."/>
            <person name="Mottier S."/>
            <person name="Galibert F."/>
            <person name="Aves S.J."/>
            <person name="Xiang Z."/>
            <person name="Hunt C."/>
            <person name="Moore K."/>
            <person name="Hurst S.M."/>
            <person name="Lucas M."/>
            <person name="Rochet M."/>
            <person name="Gaillardin C."/>
            <person name="Tallada V.A."/>
            <person name="Garzon A."/>
            <person name="Thode G."/>
            <person name="Daga R.R."/>
            <person name="Cruzado L."/>
            <person name="Jimenez J."/>
            <person name="Sanchez M."/>
            <person name="del Rey F."/>
            <person name="Benito J."/>
            <person name="Dominguez A."/>
            <person name="Revuelta J.L."/>
            <person name="Moreno S."/>
            <person name="Armstrong J."/>
            <person name="Forsburg S.L."/>
            <person name="Cerutti L."/>
            <person name="Lowe T."/>
            <person name="McCombie W.R."/>
            <person name="Paulsen I."/>
            <person name="Potashkin J."/>
            <person name="Shpakovski G.V."/>
            <person name="Ussery D."/>
            <person name="Barrell B.G."/>
            <person name="Nurse P."/>
        </authorList>
    </citation>
    <scope>NUCLEOTIDE SEQUENCE [LARGE SCALE GENOMIC DNA]</scope>
    <source>
        <strain>972 / ATCC 24843</strain>
    </source>
</reference>
<reference key="2">
    <citation type="journal article" date="2011" name="Science">
        <title>Comparative functional genomics of the fission yeasts.</title>
        <authorList>
            <person name="Rhind N."/>
            <person name="Chen Z."/>
            <person name="Yassour M."/>
            <person name="Thompson D.A."/>
            <person name="Haas B.J."/>
            <person name="Habib N."/>
            <person name="Wapinski I."/>
            <person name="Roy S."/>
            <person name="Lin M.F."/>
            <person name="Heiman D.I."/>
            <person name="Young S.K."/>
            <person name="Furuya K."/>
            <person name="Guo Y."/>
            <person name="Pidoux A."/>
            <person name="Chen H.M."/>
            <person name="Robbertse B."/>
            <person name="Goldberg J.M."/>
            <person name="Aoki K."/>
            <person name="Bayne E.H."/>
            <person name="Berlin A.M."/>
            <person name="Desjardins C.A."/>
            <person name="Dobbs E."/>
            <person name="Dukaj L."/>
            <person name="Fan L."/>
            <person name="FitzGerald M.G."/>
            <person name="French C."/>
            <person name="Gujja S."/>
            <person name="Hansen K."/>
            <person name="Keifenheim D."/>
            <person name="Levin J.Z."/>
            <person name="Mosher R.A."/>
            <person name="Mueller C.A."/>
            <person name="Pfiffner J."/>
            <person name="Priest M."/>
            <person name="Russ C."/>
            <person name="Smialowska A."/>
            <person name="Swoboda P."/>
            <person name="Sykes S.M."/>
            <person name="Vaughn M."/>
            <person name="Vengrova S."/>
            <person name="Yoder R."/>
            <person name="Zeng Q."/>
            <person name="Allshire R."/>
            <person name="Baulcombe D."/>
            <person name="Birren B.W."/>
            <person name="Brown W."/>
            <person name="Ekwall K."/>
            <person name="Kellis M."/>
            <person name="Leatherwood J."/>
            <person name="Levin H."/>
            <person name="Margalit H."/>
            <person name="Martienssen R."/>
            <person name="Nieduszynski C.A."/>
            <person name="Spatafora J.W."/>
            <person name="Friedman N."/>
            <person name="Dalgaard J.Z."/>
            <person name="Baumann P."/>
            <person name="Niki H."/>
            <person name="Regev A."/>
            <person name="Nusbaum C."/>
        </authorList>
    </citation>
    <scope>IDENTIFICATION</scope>
</reference>
<name>YGOG_SCHPO</name>
<protein>
    <recommendedName>
        <fullName>Uncharacterized protein C336.16</fullName>
    </recommendedName>
</protein>
<feature type="chain" id="PRO_0000416634" description="Uncharacterized protein C336.16">
    <location>
        <begin position="1"/>
        <end position="71"/>
    </location>
</feature>
<feature type="transmembrane region" description="Helical" evidence="1">
    <location>
        <begin position="12"/>
        <end position="34"/>
    </location>
</feature>
<proteinExistence type="predicted"/>
<sequence length="71" mass="8223">MYHSYSHDLTNYLYNYFSSTTSWLVFIILSLDTINATFSNITFVDILMETGFTKNRSLDQTTCGIKFGFVN</sequence>
<evidence type="ECO:0000255" key="1"/>
<evidence type="ECO:0000305" key="2"/>
<accession>G2TRR0</accession>
<keyword id="KW-0472">Membrane</keyword>
<keyword id="KW-1185">Reference proteome</keyword>
<keyword id="KW-0812">Transmembrane</keyword>
<keyword id="KW-1133">Transmembrane helix</keyword>
<dbReference type="EMBL" id="CU329671">
    <property type="protein sequence ID" value="CCD31373.1"/>
    <property type="molecule type" value="Genomic_DNA"/>
</dbReference>
<dbReference type="RefSeq" id="XP_004001721.1">
    <property type="nucleotide sequence ID" value="XM_004001672.1"/>
</dbReference>
<dbReference type="PaxDb" id="4896-SPBC336.16.1"/>
<dbReference type="EnsemblFungi" id="SPBC336.16.1">
    <property type="protein sequence ID" value="SPBC336.16.1:pep"/>
    <property type="gene ID" value="SPBC336.16"/>
</dbReference>
<dbReference type="PomBase" id="SPBC336.16"/>
<dbReference type="VEuPathDB" id="FungiDB:SPBC336.16"/>
<dbReference type="HOGENOM" id="CLU_2741490_0_0_1"/>
<dbReference type="InParanoid" id="G2TRR0"/>
<dbReference type="PRO" id="PR:G2TRR0"/>
<dbReference type="Proteomes" id="UP000002485">
    <property type="component" value="Chromosome II"/>
</dbReference>
<dbReference type="GO" id="GO:0016020">
    <property type="term" value="C:membrane"/>
    <property type="evidence" value="ECO:0007669"/>
    <property type="project" value="UniProtKB-SubCell"/>
</dbReference>